<feature type="chain" id="PRO_0000221873" description="Penton protein">
    <location>
        <begin position="1"/>
        <end position="571"/>
    </location>
</feature>
<feature type="region of interest" description="Disordered" evidence="2">
    <location>
        <begin position="297"/>
        <end position="325"/>
    </location>
</feature>
<feature type="region of interest" description="Disordered" evidence="2">
    <location>
        <begin position="347"/>
        <end position="383"/>
    </location>
</feature>
<feature type="short sequence motif" description="Cell attachment site" evidence="1">
    <location>
        <begin position="340"/>
        <end position="342"/>
    </location>
</feature>
<feature type="compositionally biased region" description="Gly residues" evidence="2">
    <location>
        <begin position="302"/>
        <end position="311"/>
    </location>
</feature>
<feature type="compositionally biased region" description="Low complexity" evidence="2">
    <location>
        <begin position="312"/>
        <end position="325"/>
    </location>
</feature>
<feature type="compositionally biased region" description="Low complexity" evidence="2">
    <location>
        <begin position="356"/>
        <end position="368"/>
    </location>
</feature>
<feature type="strand" evidence="5">
    <location>
        <begin position="57"/>
        <end position="60"/>
    </location>
</feature>
<feature type="turn" evidence="5">
    <location>
        <begin position="79"/>
        <end position="82"/>
    </location>
</feature>
<feature type="strand" evidence="5">
    <location>
        <begin position="83"/>
        <end position="86"/>
    </location>
</feature>
<feature type="turn" evidence="5">
    <location>
        <begin position="103"/>
        <end position="107"/>
    </location>
</feature>
<feature type="strand" evidence="5">
    <location>
        <begin position="136"/>
        <end position="139"/>
    </location>
</feature>
<feature type="strand" evidence="5">
    <location>
        <begin position="155"/>
        <end position="158"/>
    </location>
</feature>
<feature type="strand" evidence="5">
    <location>
        <begin position="177"/>
        <end position="182"/>
    </location>
</feature>
<feature type="turn" evidence="5">
    <location>
        <begin position="183"/>
        <end position="186"/>
    </location>
</feature>
<feature type="strand" evidence="5">
    <location>
        <begin position="193"/>
        <end position="199"/>
    </location>
</feature>
<feature type="strand" evidence="5">
    <location>
        <begin position="215"/>
        <end position="218"/>
    </location>
</feature>
<feature type="strand" evidence="5">
    <location>
        <begin position="221"/>
        <end position="223"/>
    </location>
</feature>
<feature type="strand" evidence="5">
    <location>
        <begin position="228"/>
        <end position="230"/>
    </location>
</feature>
<feature type="strand" evidence="5">
    <location>
        <begin position="251"/>
        <end position="253"/>
    </location>
</feature>
<feature type="strand" evidence="5">
    <location>
        <begin position="257"/>
        <end position="260"/>
    </location>
</feature>
<feature type="strand" evidence="5">
    <location>
        <begin position="275"/>
        <end position="277"/>
    </location>
</feature>
<feature type="strand" evidence="5">
    <location>
        <begin position="289"/>
        <end position="294"/>
    </location>
</feature>
<feature type="strand" evidence="5">
    <location>
        <begin position="394"/>
        <end position="397"/>
    </location>
</feature>
<feature type="strand" evidence="5">
    <location>
        <begin position="405"/>
        <end position="407"/>
    </location>
</feature>
<feature type="turn" evidence="5">
    <location>
        <begin position="408"/>
        <end position="410"/>
    </location>
</feature>
<feature type="strand" evidence="5">
    <location>
        <begin position="411"/>
        <end position="416"/>
    </location>
</feature>
<feature type="helix" evidence="5">
    <location>
        <begin position="420"/>
        <end position="422"/>
    </location>
</feature>
<feature type="turn" evidence="5">
    <location>
        <begin position="430"/>
        <end position="432"/>
    </location>
</feature>
<feature type="strand" evidence="5">
    <location>
        <begin position="457"/>
        <end position="459"/>
    </location>
</feature>
<feature type="helix" evidence="5">
    <location>
        <begin position="482"/>
        <end position="484"/>
    </location>
</feature>
<feature type="strand" evidence="5">
    <location>
        <begin position="485"/>
        <end position="489"/>
    </location>
</feature>
<feature type="strand" evidence="5">
    <location>
        <begin position="494"/>
        <end position="496"/>
    </location>
</feature>
<feature type="strand" evidence="5">
    <location>
        <begin position="503"/>
        <end position="505"/>
    </location>
</feature>
<comment type="function">
    <text evidence="1 3 4">Major capsid protein that self-associates to form penton base pentamers, each in the shape of a pentagon, situated at the 12 vertices of the pseudo T=25 capsid. Involved in virus secondary attachment to host cell after initial attachment by the fiber protein. Binds host integrin heterodimer ITGAV-ITGB5 (alphaV-beta5) thereby triggering clathrin-mediated endocytosis of virions. Mediates initial virus attachment to CXADR-negative cells. Binding to integrins ITGAV-ITGB5 also seems to induce macropinocytosis uptake of the virus. As the virus enters the host cell, penton proteins are shed concomitant with virion acidification in the endosome.</text>
</comment>
<comment type="subunit">
    <text evidence="1 3 4">Interacts (via the cell attachment site RGD) with host heterodimer ITGAV-ITGB5; this interaction promotes virus internalization. Interacts with host WWP1 and WWP2. Interacts with the fiber protein (via N-terminal tail region). Interacts with the capsid vertex protein; this interaction binds the penton base to neighboring peripentonal hexons.</text>
</comment>
<comment type="subcellular location">
    <subcellularLocation>
        <location evidence="1 4">Virion</location>
    </subcellularLocation>
    <subcellularLocation>
        <location evidence="1">Host nucleus</location>
    </subcellularLocation>
    <text evidence="1">Located at each vertex of the virion. Present in 60 copies per virion.</text>
</comment>
<comment type="induction">
    <text evidence="1">Expressed in the late phase of the viral replicative cycle.</text>
</comment>
<comment type="domain">
    <text evidence="1">The cell attachment RGD motif is exposed at the virion surface and is involved in binding to the integrin heterodimer ITGAV-ITGB5.</text>
</comment>
<comment type="miscellaneous">
    <text evidence="1">All late proteins expressed from the major late promoter are produced by alternative splicing and alternative polyadenylation of the same gene giving rise to non-overlapping ORFs. A leader sequence is present in the N-terminus of all these mRNAs and is recognized by the viral shutoff protein to provide expression although conventional translation via ribosome scanning from the cap has been shut off in the host cell.</text>
</comment>
<comment type="similarity">
    <text evidence="1">Belongs to the adenoviridae penton family.</text>
</comment>
<organismHost>
    <name type="scientific">Homo sapiens</name>
    <name type="common">Human</name>
    <dbReference type="NCBI Taxonomy" id="9606"/>
</organismHost>
<organism>
    <name type="scientific">Human adenovirus C serotype 5</name>
    <name type="common">HAdV-5</name>
    <name type="synonym">Human adenovirus 5</name>
    <dbReference type="NCBI Taxonomy" id="28285"/>
    <lineage>
        <taxon>Viruses</taxon>
        <taxon>Varidnaviria</taxon>
        <taxon>Bamfordvirae</taxon>
        <taxon>Preplasmiviricota</taxon>
        <taxon>Tectiliviricetes</taxon>
        <taxon>Rowavirales</taxon>
        <taxon>Adenoviridae</taxon>
        <taxon>Mastadenovirus</taxon>
        <taxon>Human mastadenovirus C</taxon>
    </lineage>
</organism>
<accession>P12538</accession>
<proteinExistence type="evidence at protein level"/>
<reference key="1">
    <citation type="journal article" date="1988" name="Gene">
        <title>Determination of the nucleotide sequence for the penton-base gene of human adenovirus type 5.</title>
        <authorList>
            <person name="Neumann R."/>
            <person name="Chroboczek J."/>
            <person name="Jacrot B."/>
        </authorList>
    </citation>
    <scope>NUCLEOTIDE SEQUENCE [GENOMIC DNA]</scope>
</reference>
<reference key="2">
    <citation type="journal article" date="1992" name="Virology">
        <title>The sequence of the genome of adenovirus type 5 and its comparison with the genome of adenovirus type 2.</title>
        <authorList>
            <person name="Chroboczek J."/>
            <person name="Bieber F."/>
            <person name="Jacrot B."/>
        </authorList>
    </citation>
    <scope>NUCLEOTIDE SEQUENCE [GENOMIC DNA]</scope>
</reference>
<reference key="3">
    <citation type="journal article" date="2012" name="Nat. Methods">
        <title>De novo derivation of proteomes from transcriptomes for transcript and protein identification.</title>
        <authorList>
            <person name="Evans V.C."/>
            <person name="Barker G."/>
            <person name="Heesom K.J."/>
            <person name="Fan J."/>
            <person name="Bessant C."/>
            <person name="Matthews D.A."/>
        </authorList>
    </citation>
    <scope>NUCLEOTIDE SEQUENCE [MRNA] OF 131-571</scope>
</reference>
<reference key="4">
    <citation type="journal article" date="2010" name="Virol. J.">
        <title>Integrin alphavbeta5 is a primary receptor for adenovirus in CAR-negative cells.</title>
        <authorList>
            <person name="Lyle C."/>
            <person name="McCormick F."/>
        </authorList>
    </citation>
    <scope>FUNCTION</scope>
    <scope>INTERACTION WITH HOST ITGAV-ITGB5 HETERODIMER</scope>
</reference>
<reference key="5">
    <citation type="journal article" date="2005" name="EMBO J.">
        <title>A quasi-atomic model of human adenovirus type 5 capsid.</title>
        <authorList>
            <person name="Fabry C.M."/>
            <person name="Rosa-Calatrava M."/>
            <person name="Conway J.F."/>
            <person name="Zubieta C."/>
            <person name="Cusack S."/>
            <person name="Ruigrok R.W."/>
            <person name="Schoehn G."/>
        </authorList>
    </citation>
    <scope>STRUCTURE BY ELECTRON MICROSCOPY (10.0 ANGSTROMS) OF 49-571</scope>
</reference>
<reference key="6">
    <citation type="journal article" date="2010" name="Science">
        <title>Atomic structure of human adenovirus by cryo-EM reveals interactions among protein networks.</title>
        <authorList>
            <person name="Liu H."/>
            <person name="Jin L."/>
            <person name="Koh S.B."/>
            <person name="Atanasov I."/>
            <person name="Schein S."/>
            <person name="Wu L."/>
            <person name="Zhou Z.H."/>
        </authorList>
    </citation>
    <scope>STRUCTURE BY ELECTRON MICROSCOPY (3.6 ANGSTROMS) OF THE VIRAL PARTICLE</scope>
    <scope>FUNCTION</scope>
    <scope>SUBCELLULAR LOCATION</scope>
    <scope>INTERACTION WITH CAPSID VERTEX PROTEIN</scope>
</reference>
<protein>
    <recommendedName>
        <fullName evidence="1">Penton protein</fullName>
        <shortName evidence="1">CP-P</shortName>
    </recommendedName>
    <alternativeName>
        <fullName evidence="1">Penton base protein</fullName>
    </alternativeName>
    <alternativeName>
        <fullName evidence="1">Protein III</fullName>
    </alternativeName>
</protein>
<name>CAPSP_ADE05</name>
<sequence>MRRAAMYEEGPPPSYESVVSAAPVAAALGSPFDAPLDPPFVPPRYLRPTGGRNSIRYSELAPLFDTTRVYLVDNKSTDVASLNYQNDHSNFLTTVIQNNDYSPGEASTQTINLDDRSHWGGDLKTILHTNMPNVNEFMFTNKFKARVMVSRLPTKDNQVELKYEWVEFTLPEGNYSETMTIDLMNNAIVEHYLKVGRQNGVLESDIGVKFDTRNFRLGFDPVTGLVMPGVYTNEAFHPDIILLPGCGVDFTHSRLSNLLGIRKRQPFQEGFRITYDDLEGGNIPALLDVDAYQASLKDDTEQGGGGAGGSNSSGSGAEENSNAAAAAMQPVEDMNDHAIRGDTFATRAEEKRAEAEAAAEAAAPAAQPEVEKPQKKPVIKPLTEDSKKRSYNLISNDSTFTQYRSWYLAYNYGDPQTGIRSWTLLCTPDVTCGSEQVYWSLPDMMQDPVTFRSTRQISNFPVVGAELLPVHSKSFYNDQAVYSQLIRQFTSLTHVFNRFPENQILARPPAPTITTVSENVPALTDHGTLPLRNSIGGVQRVTITDARRRTCPYVYKALGIVSPRVLSSRTF</sequence>
<evidence type="ECO:0000255" key="1">
    <source>
        <dbReference type="HAMAP-Rule" id="MF_04052"/>
    </source>
</evidence>
<evidence type="ECO:0000256" key="2">
    <source>
        <dbReference type="SAM" id="MobiDB-lite"/>
    </source>
</evidence>
<evidence type="ECO:0000269" key="3">
    <source>
    </source>
</evidence>
<evidence type="ECO:0000269" key="4">
    <source>
    </source>
</evidence>
<evidence type="ECO:0007829" key="5">
    <source>
        <dbReference type="PDB" id="6CGV"/>
    </source>
</evidence>
<gene>
    <name evidence="1" type="primary">L2</name>
</gene>
<keyword id="KW-0002">3D-structure</keyword>
<keyword id="KW-0167">Capsid protein</keyword>
<keyword id="KW-1165">Clathrin-mediated endocytosis of virus by host</keyword>
<keyword id="KW-1048">Host nucleus</keyword>
<keyword id="KW-0945">Host-virus interaction</keyword>
<keyword id="KW-0426">Late protein</keyword>
<keyword id="KW-1185">Reference proteome</keyword>
<keyword id="KW-1148">T=25 icosahedral capsid protein</keyword>
<keyword id="KW-1161">Viral attachment to host cell</keyword>
<keyword id="KW-1162">Viral penetration into host cytoplasm</keyword>
<keyword id="KW-0946">Virion</keyword>
<keyword id="KW-1164">Virus endocytosis by host</keyword>
<keyword id="KW-1160">Virus entry into host cell</keyword>
<dbReference type="EMBL" id="M73260">
    <property type="status" value="NOT_ANNOTATED_CDS"/>
    <property type="molecule type" value="Genomic_DNA"/>
</dbReference>
<dbReference type="EMBL" id="M22141">
    <property type="protein sequence ID" value="AAA42519.1"/>
    <property type="molecule type" value="Genomic_DNA"/>
</dbReference>
<dbReference type="PIR" id="JT0337">
    <property type="entry name" value="XZADH5"/>
</dbReference>
<dbReference type="RefSeq" id="AP_000206.1">
    <property type="nucleotide sequence ID" value="AC_000008.1"/>
</dbReference>
<dbReference type="PDB" id="3IZO">
    <property type="method" value="EM"/>
    <property type="chains" value="A/B/C/D/E=1-571"/>
</dbReference>
<dbReference type="PDB" id="6B1T">
    <property type="method" value="EM"/>
    <property type="resolution" value="3.20 A"/>
    <property type="chains" value="M=1-571"/>
</dbReference>
<dbReference type="PDB" id="6CGV">
    <property type="method" value="X-ray"/>
    <property type="resolution" value="3.80 A"/>
    <property type="chains" value="N=1-571"/>
</dbReference>
<dbReference type="PDB" id="7S78">
    <property type="method" value="EM"/>
    <property type="resolution" value="3.72 A"/>
    <property type="chains" value="N=1-571"/>
</dbReference>
<dbReference type="PDBsum" id="3IZO"/>
<dbReference type="PDBsum" id="6B1T"/>
<dbReference type="PDBsum" id="6CGV"/>
<dbReference type="PDBsum" id="7S78"/>
<dbReference type="EMDB" id="EMD-24881"/>
<dbReference type="EMDB" id="EMD-7034"/>
<dbReference type="SMR" id="P12538"/>
<dbReference type="IntAct" id="P12538">
    <property type="interactions" value="1"/>
</dbReference>
<dbReference type="EvolutionaryTrace" id="P12538"/>
<dbReference type="Proteomes" id="UP000004992">
    <property type="component" value="Genome"/>
</dbReference>
<dbReference type="GO" id="GO:0042025">
    <property type="term" value="C:host cell nucleus"/>
    <property type="evidence" value="ECO:0007669"/>
    <property type="project" value="UniProtKB-SubCell"/>
</dbReference>
<dbReference type="GO" id="GO:0039623">
    <property type="term" value="C:T=25 icosahedral viral capsid"/>
    <property type="evidence" value="ECO:0007669"/>
    <property type="project" value="UniProtKB-UniRule"/>
</dbReference>
<dbReference type="GO" id="GO:0019028">
    <property type="term" value="C:viral capsid"/>
    <property type="evidence" value="ECO:0000314"/>
    <property type="project" value="CACAO"/>
</dbReference>
<dbReference type="GO" id="GO:0005198">
    <property type="term" value="F:structural molecule activity"/>
    <property type="evidence" value="ECO:0007669"/>
    <property type="project" value="UniProtKB-UniRule"/>
</dbReference>
<dbReference type="GO" id="GO:0075512">
    <property type="term" value="P:clathrin-dependent endocytosis of virus by host cell"/>
    <property type="evidence" value="ECO:0007669"/>
    <property type="project" value="UniProtKB-KW"/>
</dbReference>
<dbReference type="GO" id="GO:0019062">
    <property type="term" value="P:virion attachment to host cell"/>
    <property type="evidence" value="ECO:0007669"/>
    <property type="project" value="UniProtKB-UniRule"/>
</dbReference>
<dbReference type="Gene3D" id="3.90.1620.10">
    <property type="entry name" value="adenovirus 2 penton base, domain 2"/>
    <property type="match status" value="1"/>
</dbReference>
<dbReference type="Gene3D" id="2.60.120.550">
    <property type="entry name" value="Penton protein, domain 1"/>
    <property type="match status" value="1"/>
</dbReference>
<dbReference type="HAMAP" id="MF_04052">
    <property type="entry name" value="ADV_CAPSP"/>
    <property type="match status" value="1"/>
</dbReference>
<dbReference type="InterPro" id="IPR002605">
    <property type="entry name" value="Adeno_Penton_B"/>
</dbReference>
<dbReference type="Pfam" id="PF01686">
    <property type="entry name" value="Adeno_Penton_B"/>
    <property type="match status" value="1"/>
</dbReference>